<sequence>MGNSISKVLGKLFGSKEMKILMLGLDKAGKTTILYKLKLNKIKTSTPTVGFNVETVTYKNVKFNMWDVGGQQRLRPLWRHYFPATTALIFVIDSSARNRMEEAKEELYSIIGEKEMENVVLLVWANKQDLKDAMKPQEVSDFLELEKNLKNQPWCVIGSNALSGQGLVEGLSWISNNTNVPKK</sequence>
<evidence type="ECO:0000250" key="1"/>
<evidence type="ECO:0000269" key="2">
    <source>
    </source>
</evidence>
<evidence type="ECO:0000269" key="3">
    <source>
    </source>
</evidence>
<evidence type="ECO:0000305" key="4"/>
<accession>P40994</accession>
<accession>D6W2F5</accession>
<comment type="function">
    <text>GTP-binding protein involved in protein trafficking; may modulate vesicle budding and uncoating within the Golgi apparatus.</text>
</comment>
<comment type="subunit">
    <text evidence="3">Interacts with RUD3.</text>
</comment>
<comment type="interaction">
    <interactant intactId="EBI-2824">
        <id>P40994</id>
    </interactant>
    <interactant intactId="EBI-10218">
        <id>P25369</id>
        <label>LSB5</label>
    </interactant>
    <organismsDiffer>false</organismsDiffer>
    <experiments>2</experiments>
</comment>
<comment type="subcellular location">
    <subcellularLocation>
        <location>Golgi apparatus</location>
    </subcellularLocation>
</comment>
<comment type="miscellaneous">
    <text evidence="2">Present with 1240 molecules/cell in log phase SD medium.</text>
</comment>
<comment type="similarity">
    <text evidence="4">Belongs to the small GTPase superfamily. Arf family.</text>
</comment>
<feature type="initiator methionine" description="Removed">
    <location>
        <position position="1"/>
    </location>
</feature>
<feature type="chain" id="PRO_0000207420" description="ADP-ribosylation factor 3">
    <location>
        <begin position="2"/>
        <end position="183"/>
    </location>
</feature>
<feature type="binding site" evidence="1">
    <location>
        <begin position="24"/>
        <end position="31"/>
    </location>
    <ligand>
        <name>GTP</name>
        <dbReference type="ChEBI" id="CHEBI:37565"/>
    </ligand>
</feature>
<feature type="binding site" evidence="1">
    <location>
        <begin position="67"/>
        <end position="71"/>
    </location>
    <ligand>
        <name>GTP</name>
        <dbReference type="ChEBI" id="CHEBI:37565"/>
    </ligand>
</feature>
<feature type="binding site" evidence="1">
    <location>
        <begin position="126"/>
        <end position="129"/>
    </location>
    <ligand>
        <name>GTP</name>
        <dbReference type="ChEBI" id="CHEBI:37565"/>
    </ligand>
</feature>
<feature type="lipid moiety-binding region" description="N-myristoyl glycine" evidence="1">
    <location>
        <position position="2"/>
    </location>
</feature>
<protein>
    <recommendedName>
        <fullName>ADP-ribosylation factor 3</fullName>
    </recommendedName>
</protein>
<keyword id="KW-0931">ER-Golgi transport</keyword>
<keyword id="KW-0333">Golgi apparatus</keyword>
<keyword id="KW-0342">GTP-binding</keyword>
<keyword id="KW-0449">Lipoprotein</keyword>
<keyword id="KW-0519">Myristate</keyword>
<keyword id="KW-0547">Nucleotide-binding</keyword>
<keyword id="KW-0653">Protein transport</keyword>
<keyword id="KW-1185">Reference proteome</keyword>
<keyword id="KW-0813">Transport</keyword>
<organism>
    <name type="scientific">Saccharomyces cerevisiae (strain ATCC 204508 / S288c)</name>
    <name type="common">Baker's yeast</name>
    <dbReference type="NCBI Taxonomy" id="559292"/>
    <lineage>
        <taxon>Eukaryota</taxon>
        <taxon>Fungi</taxon>
        <taxon>Dikarya</taxon>
        <taxon>Ascomycota</taxon>
        <taxon>Saccharomycotina</taxon>
        <taxon>Saccharomycetes</taxon>
        <taxon>Saccharomycetales</taxon>
        <taxon>Saccharomycetaceae</taxon>
        <taxon>Saccharomyces</taxon>
    </lineage>
</organism>
<dbReference type="EMBL" id="L28996">
    <property type="protein sequence ID" value="AAA61614.1"/>
    <property type="molecule type" value="mRNA"/>
</dbReference>
<dbReference type="EMBL" id="X94335">
    <property type="protein sequence ID" value="CAA64016.1"/>
    <property type="molecule type" value="Genomic_DNA"/>
</dbReference>
<dbReference type="EMBL" id="Z75002">
    <property type="protein sequence ID" value="CAA99291.1"/>
    <property type="molecule type" value="Genomic_DNA"/>
</dbReference>
<dbReference type="EMBL" id="AY557751">
    <property type="protein sequence ID" value="AAS56077.1"/>
    <property type="molecule type" value="Genomic_DNA"/>
</dbReference>
<dbReference type="EMBL" id="BK006948">
    <property type="protein sequence ID" value="DAA10871.1"/>
    <property type="molecule type" value="Genomic_DNA"/>
</dbReference>
<dbReference type="PIR" id="A53917">
    <property type="entry name" value="A53917"/>
</dbReference>
<dbReference type="RefSeq" id="NP_014737.1">
    <property type="nucleotide sequence ID" value="NM_001183513.1"/>
</dbReference>
<dbReference type="SMR" id="P40994"/>
<dbReference type="BioGRID" id="34492">
    <property type="interactions" value="127"/>
</dbReference>
<dbReference type="FunCoup" id="P40994">
    <property type="interactions" value="129"/>
</dbReference>
<dbReference type="IntAct" id="P40994">
    <property type="interactions" value="11"/>
</dbReference>
<dbReference type="MINT" id="P40994"/>
<dbReference type="STRING" id="4932.YOR094W"/>
<dbReference type="iPTMnet" id="P40994"/>
<dbReference type="PaxDb" id="4932-YOR094W"/>
<dbReference type="PeptideAtlas" id="P40994"/>
<dbReference type="EnsemblFungi" id="YOR094W_mRNA">
    <property type="protein sequence ID" value="YOR094W"/>
    <property type="gene ID" value="YOR094W"/>
</dbReference>
<dbReference type="GeneID" id="854261"/>
<dbReference type="KEGG" id="sce:YOR094W"/>
<dbReference type="AGR" id="SGD:S000005620"/>
<dbReference type="SGD" id="S000005620">
    <property type="gene designation" value="ARF3"/>
</dbReference>
<dbReference type="VEuPathDB" id="FungiDB:YOR094W"/>
<dbReference type="eggNOG" id="KOG0071">
    <property type="taxonomic scope" value="Eukaryota"/>
</dbReference>
<dbReference type="HOGENOM" id="CLU_040729_9_3_1"/>
<dbReference type="InParanoid" id="P40994"/>
<dbReference type="OMA" id="GGQISKM"/>
<dbReference type="OrthoDB" id="2011769at2759"/>
<dbReference type="BioCyc" id="YEAST:G3O-33628-MONOMER"/>
<dbReference type="BioGRID-ORCS" id="854261">
    <property type="hits" value="0 hits in 10 CRISPR screens"/>
</dbReference>
<dbReference type="PRO" id="PR:P40994"/>
<dbReference type="Proteomes" id="UP000002311">
    <property type="component" value="Chromosome XV"/>
</dbReference>
<dbReference type="RNAct" id="P40994">
    <property type="molecule type" value="protein"/>
</dbReference>
<dbReference type="GO" id="GO:0005935">
    <property type="term" value="C:cellular bud neck"/>
    <property type="evidence" value="ECO:0000314"/>
    <property type="project" value="SGD"/>
</dbReference>
<dbReference type="GO" id="GO:0005934">
    <property type="term" value="C:cellular bud tip"/>
    <property type="evidence" value="ECO:0000314"/>
    <property type="project" value="SGD"/>
</dbReference>
<dbReference type="GO" id="GO:0005737">
    <property type="term" value="C:cytoplasm"/>
    <property type="evidence" value="ECO:0000318"/>
    <property type="project" value="GO_Central"/>
</dbReference>
<dbReference type="GO" id="GO:0005829">
    <property type="term" value="C:cytosol"/>
    <property type="evidence" value="ECO:0007005"/>
    <property type="project" value="SGD"/>
</dbReference>
<dbReference type="GO" id="GO:0005794">
    <property type="term" value="C:Golgi apparatus"/>
    <property type="evidence" value="ECO:0007669"/>
    <property type="project" value="UniProtKB-SubCell"/>
</dbReference>
<dbReference type="GO" id="GO:0005886">
    <property type="term" value="C:plasma membrane"/>
    <property type="evidence" value="ECO:0000318"/>
    <property type="project" value="GO_Central"/>
</dbReference>
<dbReference type="GO" id="GO:0008047">
    <property type="term" value="F:enzyme activator activity"/>
    <property type="evidence" value="ECO:0000315"/>
    <property type="project" value="SGD"/>
</dbReference>
<dbReference type="GO" id="GO:0005525">
    <property type="term" value="F:GTP binding"/>
    <property type="evidence" value="ECO:0000318"/>
    <property type="project" value="GO_Central"/>
</dbReference>
<dbReference type="GO" id="GO:0003924">
    <property type="term" value="F:GTPase activity"/>
    <property type="evidence" value="ECO:0000314"/>
    <property type="project" value="SGD"/>
</dbReference>
<dbReference type="GO" id="GO:0003729">
    <property type="term" value="F:mRNA binding"/>
    <property type="evidence" value="ECO:0000314"/>
    <property type="project" value="SGD"/>
</dbReference>
<dbReference type="GO" id="GO:0051666">
    <property type="term" value="P:actin cortical patch localization"/>
    <property type="evidence" value="ECO:0000315"/>
    <property type="project" value="SGD"/>
</dbReference>
<dbReference type="GO" id="GO:0051017">
    <property type="term" value="P:actin filament bundle assembly"/>
    <property type="evidence" value="ECO:0000316"/>
    <property type="project" value="SGD"/>
</dbReference>
<dbReference type="GO" id="GO:0000282">
    <property type="term" value="P:cellular bud site selection"/>
    <property type="evidence" value="ECO:0000315"/>
    <property type="project" value="SGD"/>
</dbReference>
<dbReference type="GO" id="GO:0006897">
    <property type="term" value="P:endocytosis"/>
    <property type="evidence" value="ECO:0000315"/>
    <property type="project" value="SGD"/>
</dbReference>
<dbReference type="GO" id="GO:0006886">
    <property type="term" value="P:intracellular protein transport"/>
    <property type="evidence" value="ECO:0000315"/>
    <property type="project" value="SGD"/>
</dbReference>
<dbReference type="GO" id="GO:0036267">
    <property type="term" value="P:invasive filamentous growth"/>
    <property type="evidence" value="ECO:0000315"/>
    <property type="project" value="SGD"/>
</dbReference>
<dbReference type="GO" id="GO:0001403">
    <property type="term" value="P:invasive growth in response to glucose limitation"/>
    <property type="evidence" value="ECO:0000315"/>
    <property type="project" value="SGD"/>
</dbReference>
<dbReference type="GO" id="GO:0010513">
    <property type="term" value="P:positive regulation of phosphatidylinositol biosynthetic process"/>
    <property type="evidence" value="ECO:0000315"/>
    <property type="project" value="SGD"/>
</dbReference>
<dbReference type="GO" id="GO:0016192">
    <property type="term" value="P:vesicle-mediated transport"/>
    <property type="evidence" value="ECO:0000318"/>
    <property type="project" value="GO_Central"/>
</dbReference>
<dbReference type="CDD" id="cd04149">
    <property type="entry name" value="Arf6"/>
    <property type="match status" value="1"/>
</dbReference>
<dbReference type="FunFam" id="3.40.50.300:FF:000412">
    <property type="entry name" value="ADP-ribosylation factor 1"/>
    <property type="match status" value="1"/>
</dbReference>
<dbReference type="Gene3D" id="3.40.50.300">
    <property type="entry name" value="P-loop containing nucleotide triphosphate hydrolases"/>
    <property type="match status" value="1"/>
</dbReference>
<dbReference type="InterPro" id="IPR041838">
    <property type="entry name" value="Arf6"/>
</dbReference>
<dbReference type="InterPro" id="IPR027417">
    <property type="entry name" value="P-loop_NTPase"/>
</dbReference>
<dbReference type="InterPro" id="IPR005225">
    <property type="entry name" value="Small_GTP-bd"/>
</dbReference>
<dbReference type="InterPro" id="IPR024156">
    <property type="entry name" value="Small_GTPase_ARF"/>
</dbReference>
<dbReference type="InterPro" id="IPR006689">
    <property type="entry name" value="Small_GTPase_ARF/SAR"/>
</dbReference>
<dbReference type="NCBIfam" id="TIGR00231">
    <property type="entry name" value="small_GTP"/>
    <property type="match status" value="1"/>
</dbReference>
<dbReference type="PANTHER" id="PTHR11711">
    <property type="entry name" value="ADP RIBOSYLATION FACTOR-RELATED"/>
    <property type="match status" value="1"/>
</dbReference>
<dbReference type="Pfam" id="PF00025">
    <property type="entry name" value="Arf"/>
    <property type="match status" value="1"/>
</dbReference>
<dbReference type="PRINTS" id="PR00328">
    <property type="entry name" value="SAR1GTPBP"/>
</dbReference>
<dbReference type="SMART" id="SM00177">
    <property type="entry name" value="ARF"/>
    <property type="match status" value="1"/>
</dbReference>
<dbReference type="SMART" id="SM00175">
    <property type="entry name" value="RAB"/>
    <property type="match status" value="1"/>
</dbReference>
<dbReference type="SMART" id="SM00178">
    <property type="entry name" value="SAR"/>
    <property type="match status" value="1"/>
</dbReference>
<dbReference type="SUPFAM" id="SSF52540">
    <property type="entry name" value="P-loop containing nucleoside triphosphate hydrolases"/>
    <property type="match status" value="1"/>
</dbReference>
<dbReference type="PROSITE" id="PS51417">
    <property type="entry name" value="ARF"/>
    <property type="match status" value="1"/>
</dbReference>
<proteinExistence type="evidence at protein level"/>
<gene>
    <name type="primary">ARF3</name>
    <name type="ordered locus">YOR094W</name>
    <name type="ORF">YOR3172W</name>
</gene>
<reference key="1">
    <citation type="journal article" date="1994" name="J. Biol. Chem.">
        <title>Characterization of a glucose-repressible ADP-ribosylation factor 3 (ARF3) from Saccharomyces cerevisiae.</title>
        <authorList>
            <person name="Lee F.-J.S."/>
            <person name="Stevens L.A."/>
            <person name="Kao Y.L."/>
            <person name="Moss J."/>
            <person name="Vaughan M."/>
        </authorList>
    </citation>
    <scope>NUCLEOTIDE SEQUENCE [MRNA]</scope>
</reference>
<reference key="2">
    <citation type="journal article" date="1997" name="Yeast">
        <title>DNA sequencing and analysis of 130 kb from yeast chromosome XV.</title>
        <authorList>
            <person name="Voss H."/>
            <person name="Benes V."/>
            <person name="Andrade M.A."/>
            <person name="Valencia A."/>
            <person name="Rechmann S."/>
            <person name="Teodoru C."/>
            <person name="Schwager C."/>
            <person name="Paces V."/>
            <person name="Sander C."/>
            <person name="Ansorge W."/>
        </authorList>
    </citation>
    <scope>NUCLEOTIDE SEQUENCE [GENOMIC DNA]</scope>
</reference>
<reference key="3">
    <citation type="journal article" date="1997" name="Nature">
        <title>The nucleotide sequence of Saccharomyces cerevisiae chromosome XV.</title>
        <authorList>
            <person name="Dujon B."/>
            <person name="Albermann K."/>
            <person name="Aldea M."/>
            <person name="Alexandraki D."/>
            <person name="Ansorge W."/>
            <person name="Arino J."/>
            <person name="Benes V."/>
            <person name="Bohn C."/>
            <person name="Bolotin-Fukuhara M."/>
            <person name="Bordonne R."/>
            <person name="Boyer J."/>
            <person name="Camasses A."/>
            <person name="Casamayor A."/>
            <person name="Casas C."/>
            <person name="Cheret G."/>
            <person name="Cziepluch C."/>
            <person name="Daignan-Fornier B."/>
            <person name="Dang V.-D."/>
            <person name="de Haan M."/>
            <person name="Delius H."/>
            <person name="Durand P."/>
            <person name="Fairhead C."/>
            <person name="Feldmann H."/>
            <person name="Gaillon L."/>
            <person name="Galisson F."/>
            <person name="Gamo F.-J."/>
            <person name="Gancedo C."/>
            <person name="Goffeau A."/>
            <person name="Goulding S.E."/>
            <person name="Grivell L.A."/>
            <person name="Habbig B."/>
            <person name="Hand N.J."/>
            <person name="Hani J."/>
            <person name="Hattenhorst U."/>
            <person name="Hebling U."/>
            <person name="Hernando Y."/>
            <person name="Herrero E."/>
            <person name="Heumann K."/>
            <person name="Hiesel R."/>
            <person name="Hilger F."/>
            <person name="Hofmann B."/>
            <person name="Hollenberg C.P."/>
            <person name="Hughes B."/>
            <person name="Jauniaux J.-C."/>
            <person name="Kalogeropoulos A."/>
            <person name="Katsoulou C."/>
            <person name="Kordes E."/>
            <person name="Lafuente M.J."/>
            <person name="Landt O."/>
            <person name="Louis E.J."/>
            <person name="Maarse A.C."/>
            <person name="Madania A."/>
            <person name="Mannhaupt G."/>
            <person name="Marck C."/>
            <person name="Martin R.P."/>
            <person name="Mewes H.-W."/>
            <person name="Michaux G."/>
            <person name="Paces V."/>
            <person name="Parle-McDermott A.G."/>
            <person name="Pearson B.M."/>
            <person name="Perrin A."/>
            <person name="Pettersson B."/>
            <person name="Poch O."/>
            <person name="Pohl T.M."/>
            <person name="Poirey R."/>
            <person name="Portetelle D."/>
            <person name="Pujol A."/>
            <person name="Purnelle B."/>
            <person name="Ramezani Rad M."/>
            <person name="Rechmann S."/>
            <person name="Schwager C."/>
            <person name="Schweizer M."/>
            <person name="Sor F."/>
            <person name="Sterky F."/>
            <person name="Tarassov I.A."/>
            <person name="Teodoru C."/>
            <person name="Tettelin H."/>
            <person name="Thierry A."/>
            <person name="Tobiasch E."/>
            <person name="Tzermia M."/>
            <person name="Uhlen M."/>
            <person name="Unseld M."/>
            <person name="Valens M."/>
            <person name="Vandenbol M."/>
            <person name="Vetter I."/>
            <person name="Vlcek C."/>
            <person name="Voet M."/>
            <person name="Volckaert G."/>
            <person name="Voss H."/>
            <person name="Wambutt R."/>
            <person name="Wedler H."/>
            <person name="Wiemann S."/>
            <person name="Winsor B."/>
            <person name="Wolfe K.H."/>
            <person name="Zollner A."/>
            <person name="Zumstein E."/>
            <person name="Kleine K."/>
        </authorList>
    </citation>
    <scope>NUCLEOTIDE SEQUENCE [LARGE SCALE GENOMIC DNA]</scope>
    <source>
        <strain>ATCC 204508 / S288c</strain>
    </source>
</reference>
<reference key="4">
    <citation type="journal article" date="2014" name="G3 (Bethesda)">
        <title>The reference genome sequence of Saccharomyces cerevisiae: Then and now.</title>
        <authorList>
            <person name="Engel S.R."/>
            <person name="Dietrich F.S."/>
            <person name="Fisk D.G."/>
            <person name="Binkley G."/>
            <person name="Balakrishnan R."/>
            <person name="Costanzo M.C."/>
            <person name="Dwight S.S."/>
            <person name="Hitz B.C."/>
            <person name="Karra K."/>
            <person name="Nash R.S."/>
            <person name="Weng S."/>
            <person name="Wong E.D."/>
            <person name="Lloyd P."/>
            <person name="Skrzypek M.S."/>
            <person name="Miyasato S.R."/>
            <person name="Simison M."/>
            <person name="Cherry J.M."/>
        </authorList>
    </citation>
    <scope>GENOME REANNOTATION</scope>
    <source>
        <strain>ATCC 204508 / S288c</strain>
    </source>
</reference>
<reference key="5">
    <citation type="journal article" date="2007" name="Genome Res.">
        <title>Approaching a complete repository of sequence-verified protein-encoding clones for Saccharomyces cerevisiae.</title>
        <authorList>
            <person name="Hu Y."/>
            <person name="Rolfs A."/>
            <person name="Bhullar B."/>
            <person name="Murthy T.V.S."/>
            <person name="Zhu C."/>
            <person name="Berger M.F."/>
            <person name="Camargo A.A."/>
            <person name="Kelley F."/>
            <person name="McCarron S."/>
            <person name="Jepson D."/>
            <person name="Richardson A."/>
            <person name="Raphael J."/>
            <person name="Moreira D."/>
            <person name="Taycher E."/>
            <person name="Zuo D."/>
            <person name="Mohr S."/>
            <person name="Kane M.F."/>
            <person name="Williamson J."/>
            <person name="Simpson A.J.G."/>
            <person name="Bulyk M.L."/>
            <person name="Harlow E."/>
            <person name="Marsischky G."/>
            <person name="Kolodner R.D."/>
            <person name="LaBaer J."/>
        </authorList>
    </citation>
    <scope>NUCLEOTIDE SEQUENCE [GENOMIC DNA]</scope>
    <source>
        <strain>ATCC 204508 / S288c</strain>
    </source>
</reference>
<reference key="6">
    <citation type="journal article" date="2003" name="Nature">
        <title>Global analysis of protein expression in yeast.</title>
        <authorList>
            <person name="Ghaemmaghami S."/>
            <person name="Huh W.-K."/>
            <person name="Bower K."/>
            <person name="Howson R.W."/>
            <person name="Belle A."/>
            <person name="Dephoure N."/>
            <person name="O'Shea E.K."/>
            <person name="Weissman J.S."/>
        </authorList>
    </citation>
    <scope>LEVEL OF PROTEIN EXPRESSION [LARGE SCALE ANALYSIS]</scope>
</reference>
<reference key="7">
    <citation type="journal article" date="2004" name="J. Cell Biol.">
        <title>The GTPase Arf1p and the ER to Golgi cargo receptor Erv14p cooperate to recruit the golgin Rud3p to the cis-Golgi.</title>
        <authorList>
            <person name="Gillingham A.K."/>
            <person name="Tong A.H.Y."/>
            <person name="Boone C."/>
            <person name="Munro S."/>
        </authorList>
    </citation>
    <scope>INTERACTION WITH RUD3</scope>
</reference>
<name>ARF3_YEAST</name>